<comment type="function">
    <text evidence="2">Enhances the high-affinity desensitization of human P2RX3 purinoceptors.</text>
</comment>
<comment type="subcellular location">
    <subcellularLocation>
        <location evidence="1">Secreted</location>
    </subcellularLocation>
</comment>
<comment type="tissue specificity">
    <text evidence="5">Expressed by the venom gland.</text>
</comment>
<comment type="domain">
    <text evidence="2">The toxin is composed of 2 domains: a highly rigid N-terminal inhibitor cystine knot (knottin) domain and a rather flexible C-terminal linear cationic cytotoxin domain that forms amphiphilic alpha-helices.</text>
</comment>
<comment type="domain">
    <text evidence="2">The presence of a 'disulfide through disulfide knot' structurally defines this protein as a knottin.</text>
</comment>
<comment type="similarity">
    <text evidence="4">Belongs to the neurotoxin 19 (CSTX) family. 05 (U4-Lctx) subfamily.</text>
</comment>
<protein>
    <recommendedName>
        <fullName evidence="4">U4-lycotoxin-Ls1c</fullName>
        <shortName evidence="4">U4-LCTX-Ls1c</shortName>
    </recommendedName>
    <alternativeName>
        <fullName>Toxin-like structure LSTX-C3</fullName>
    </alternativeName>
</protein>
<sequence>MKVLVLFSVLFLTLFSYSSTEAIDEFDSDAEDDMLSLMANEQVRAKACTPRLHDCSHDRHSCCRGELFKDVCYCFYPEGEDITEVCSCQQPKSHKYIEKVVDKAKTVVG</sequence>
<keyword id="KW-0108">Calcium channel impairing toxin</keyword>
<keyword id="KW-1015">Disulfide bond</keyword>
<keyword id="KW-0872">Ion channel impairing toxin</keyword>
<keyword id="KW-0960">Knottin</keyword>
<keyword id="KW-0964">Secreted</keyword>
<keyword id="KW-0732">Signal</keyword>
<keyword id="KW-0800">Toxin</keyword>
<name>TX403_LYCSI</name>
<organism>
    <name type="scientific">Lycosa singoriensis</name>
    <name type="common">Wolf spider</name>
    <name type="synonym">Aranea singoriensis</name>
    <dbReference type="NCBI Taxonomy" id="434756"/>
    <lineage>
        <taxon>Eukaryota</taxon>
        <taxon>Metazoa</taxon>
        <taxon>Ecdysozoa</taxon>
        <taxon>Arthropoda</taxon>
        <taxon>Chelicerata</taxon>
        <taxon>Arachnida</taxon>
        <taxon>Araneae</taxon>
        <taxon>Araneomorphae</taxon>
        <taxon>Entelegynae</taxon>
        <taxon>Lycosoidea</taxon>
        <taxon>Lycosidae</taxon>
        <taxon>Lycosa</taxon>
    </lineage>
</organism>
<reference key="1">
    <citation type="journal article" date="2010" name="Zoology">
        <title>Transcriptome analysis of the venom glands of the Chinese wolf spider Lycosa singoriensis.</title>
        <authorList>
            <person name="Zhang Y."/>
            <person name="Chen J."/>
            <person name="Tang X."/>
            <person name="Wang F."/>
            <person name="Jiang L."/>
            <person name="Xiong X."/>
            <person name="Wang M."/>
            <person name="Rong M."/>
            <person name="Liu Z."/>
            <person name="Liang S."/>
        </authorList>
    </citation>
    <scope>NUCLEOTIDE SEQUENCE [LARGE SCALE MRNA]</scope>
    <source>
        <tissue>Venom gland</tissue>
    </source>
</reference>
<evidence type="ECO:0000250" key="1"/>
<evidence type="ECO:0000250" key="2">
    <source>
        <dbReference type="UniProtKB" id="B3EWH0"/>
    </source>
</evidence>
<evidence type="ECO:0000255" key="3"/>
<evidence type="ECO:0000305" key="4"/>
<evidence type="ECO:0000305" key="5">
    <source>
    </source>
</evidence>
<proteinExistence type="inferred from homology"/>
<feature type="signal peptide" evidence="3">
    <location>
        <begin position="1"/>
        <end position="22"/>
    </location>
</feature>
<feature type="propeptide" id="PRO_0000401683" evidence="1">
    <location>
        <begin position="23"/>
        <end position="44"/>
    </location>
</feature>
<feature type="chain" id="PRO_0000401684" description="U4-lycotoxin-Ls1c">
    <location>
        <begin position="45"/>
        <end position="109"/>
    </location>
</feature>
<feature type="region of interest" description="Knottin domain" evidence="2">
    <location>
        <begin position="45"/>
        <end position="88"/>
    </location>
</feature>
<feature type="region of interest" description="Linear cationic cytotoxin domain" evidence="2">
    <location>
        <begin position="89"/>
        <end position="108"/>
    </location>
</feature>
<feature type="disulfide bond" evidence="2">
    <location>
        <begin position="48"/>
        <end position="63"/>
    </location>
</feature>
<feature type="disulfide bond" evidence="2">
    <location>
        <begin position="55"/>
        <end position="72"/>
    </location>
</feature>
<feature type="disulfide bond" evidence="2">
    <location>
        <begin position="62"/>
        <end position="88"/>
    </location>
</feature>
<feature type="disulfide bond" evidence="2">
    <location>
        <begin position="74"/>
        <end position="86"/>
    </location>
</feature>
<dbReference type="EMBL" id="EU926019">
    <property type="protein sequence ID" value="ACI41351.1"/>
    <property type="molecule type" value="mRNA"/>
</dbReference>
<dbReference type="EMBL" id="FM864023">
    <property type="protein sequence ID" value="CAS03621.1"/>
    <property type="molecule type" value="mRNA"/>
</dbReference>
<dbReference type="SMR" id="B6DCT5"/>
<dbReference type="ArachnoServer" id="AS000968">
    <property type="toxin name" value="U4-lycotoxin-Ls1c"/>
</dbReference>
<dbReference type="GO" id="GO:0005576">
    <property type="term" value="C:extracellular region"/>
    <property type="evidence" value="ECO:0007669"/>
    <property type="project" value="UniProtKB-SubCell"/>
</dbReference>
<dbReference type="GO" id="GO:0005246">
    <property type="term" value="F:calcium channel regulator activity"/>
    <property type="evidence" value="ECO:0007669"/>
    <property type="project" value="UniProtKB-KW"/>
</dbReference>
<dbReference type="GO" id="GO:0090729">
    <property type="term" value="F:toxin activity"/>
    <property type="evidence" value="ECO:0007669"/>
    <property type="project" value="UniProtKB-KW"/>
</dbReference>
<dbReference type="InterPro" id="IPR019553">
    <property type="entry name" value="Spider_toxin_CSTX_knottin"/>
</dbReference>
<dbReference type="InterPro" id="IPR011142">
    <property type="entry name" value="Spider_toxin_CSTX_Knottin_CS"/>
</dbReference>
<dbReference type="Pfam" id="PF10530">
    <property type="entry name" value="Toxin_35"/>
    <property type="match status" value="1"/>
</dbReference>
<dbReference type="PROSITE" id="PS60029">
    <property type="entry name" value="SPIDER_CSTX"/>
    <property type="match status" value="1"/>
</dbReference>
<accession>B6DCT5</accession>